<proteinExistence type="evidence at transcript level"/>
<sequence>MGHHHDGGDGVPQHHVNSPRFSGPMTRRAQSFKRGGSAGSSSNNNNTHVGVSGGDGNNNNNTSSTLRVHHEIDLPLNSPRSEIVSGSSGSDPSGGFDSALNRKHQTYGQLRERVVKGLLRKPMGSVVSDFSLRERKKLGHWMFFAFCGVCLFLGVFKICATGWLGSAIDGAASDQDLSIPRVNLLDHSSHDYIYKDGGNDVDPTLVMVASDVVGDQNSVVEFSGVWAKPESGNFSRCIDSSRSRKKLGANTNGYLLINANGGLNQMRFGICDMVAVAKIMKATLVLPSLDHSSYWADDSGFKDLFDWQHFIEELKDDIHIVEMLPSELAGIEPFVKTPISWSKVGYYKKEVLPLLKQHIVMYLTHTDSRLANNDLPDSVQKLRCRVNYRALKYSAPIEELGNVLVSRMRQDRGPYLALHLRYEKDMLAFTGCSHSLTAEEDEELRQMRYEVSHWKEKEINGTERRLQGGCPLTPRETSLLLRALEFPSSSRIYLVAGEAYGNGSMDPLNTDFPNIFSHSILATKEELSPFNNHQNMLAGLDYIVALQSEVFLYTYDGNMAKAVQGHRRFEDFKKTINPDKMNFVKLVDALDEGRISWKKFSSKVKKLHKDRNGAPYNRESGEFPKLEESFYANPLPGCICENTEEEGLMRRT</sequence>
<feature type="chain" id="PRO_0000442097" description="O-fucosyltransferase 35">
    <location>
        <begin position="1"/>
        <end position="652"/>
    </location>
</feature>
<feature type="transmembrane region" description="Helical; Signal-anchor for type II membrane protein" evidence="5">
    <location>
        <begin position="138"/>
        <end position="158"/>
    </location>
</feature>
<feature type="region of interest" description="Disordered" evidence="4">
    <location>
        <begin position="1"/>
        <end position="64"/>
    </location>
</feature>
<feature type="region of interest" description="Disordered" evidence="4">
    <location>
        <begin position="78"/>
        <end position="102"/>
    </location>
</feature>
<feature type="compositionally biased region" description="Low complexity" evidence="4">
    <location>
        <begin position="85"/>
        <end position="98"/>
    </location>
</feature>
<feature type="binding site" evidence="1">
    <location>
        <begin position="419"/>
        <end position="421"/>
    </location>
    <ligand>
        <name>substrate</name>
    </ligand>
</feature>
<feature type="glycosylation site" description="N-linked (GlcNAc...) asparagine" evidence="3">
    <location>
        <position position="233"/>
    </location>
</feature>
<feature type="glycosylation site" description="N-linked (GlcNAc...) asparagine" evidence="3">
    <location>
        <position position="460"/>
    </location>
</feature>
<feature type="glycosylation site" description="N-linked (GlcNAc...) asparagine" evidence="3">
    <location>
        <position position="502"/>
    </location>
</feature>
<evidence type="ECO:0000250" key="1">
    <source>
        <dbReference type="UniProtKB" id="Q9H488"/>
    </source>
</evidence>
<evidence type="ECO:0000255" key="2"/>
<evidence type="ECO:0000255" key="3">
    <source>
        <dbReference type="PROSITE-ProRule" id="PRU00498"/>
    </source>
</evidence>
<evidence type="ECO:0000256" key="4">
    <source>
        <dbReference type="SAM" id="MobiDB-lite"/>
    </source>
</evidence>
<evidence type="ECO:0000305" key="5"/>
<evidence type="ECO:0000312" key="6">
    <source>
        <dbReference type="Araport" id="AT5G35570"/>
    </source>
</evidence>
<evidence type="ECO:0000312" key="7">
    <source>
        <dbReference type="EMBL" id="ARJ31451.1"/>
    </source>
</evidence>
<evidence type="ECO:0000312" key="8">
    <source>
        <dbReference type="EMBL" id="BAB09990.1"/>
    </source>
</evidence>
<name>OFT35_ARATH</name>
<keyword id="KW-0119">Carbohydrate metabolism</keyword>
<keyword id="KW-0294">Fucose metabolism</keyword>
<keyword id="KW-0325">Glycoprotein</keyword>
<keyword id="KW-0328">Glycosyltransferase</keyword>
<keyword id="KW-0472">Membrane</keyword>
<keyword id="KW-1185">Reference proteome</keyword>
<keyword id="KW-0735">Signal-anchor</keyword>
<keyword id="KW-0808">Transferase</keyword>
<keyword id="KW-0812">Transmembrane</keyword>
<keyword id="KW-1133">Transmembrane helix</keyword>
<accession>Q94BY4</accession>
<accession>Q9FH12</accession>
<protein>
    <recommendedName>
        <fullName evidence="5">O-fucosyltransferase 35</fullName>
        <shortName evidence="5">O-FucT-35</shortName>
        <ecNumber evidence="5">2.4.1.-</ecNumber>
    </recommendedName>
    <alternativeName>
        <fullName evidence="7">O-fucosyltransferase family protein</fullName>
    </alternativeName>
</protein>
<reference key="1">
    <citation type="submission" date="2017-04" db="EMBL/GenBank/DDBJ databases">
        <title>Arabidopsis glycosyltransferases: an update.</title>
        <authorList>
            <person name="Zeng W."/>
            <person name="Gluza P."/>
            <person name="Heazlewood J."/>
        </authorList>
    </citation>
    <scope>NUCLEOTIDE SEQUENCE [MRNA]</scope>
    <source>
        <strain>cv. Columbia</strain>
    </source>
</reference>
<reference key="2">
    <citation type="journal article" date="2000" name="DNA Res.">
        <title>Structural analysis of Arabidopsis thaliana chromosome 5. X. Sequence features of the regions of 3,076,755 bp covered by sixty P1 and TAC clones.</title>
        <authorList>
            <person name="Sato S."/>
            <person name="Nakamura Y."/>
            <person name="Kaneko T."/>
            <person name="Katoh T."/>
            <person name="Asamizu E."/>
            <person name="Kotani H."/>
            <person name="Tabata S."/>
        </authorList>
    </citation>
    <scope>NUCLEOTIDE SEQUENCE [LARGE SCALE GENOMIC DNA]</scope>
    <source>
        <strain>cv. Columbia</strain>
    </source>
</reference>
<reference key="3">
    <citation type="journal article" date="2017" name="Plant J.">
        <title>Araport11: a complete reannotation of the Arabidopsis thaliana reference genome.</title>
        <authorList>
            <person name="Cheng C.Y."/>
            <person name="Krishnakumar V."/>
            <person name="Chan A.P."/>
            <person name="Thibaud-Nissen F."/>
            <person name="Schobel S."/>
            <person name="Town C.D."/>
        </authorList>
    </citation>
    <scope>GENOME REANNOTATION</scope>
    <source>
        <strain>cv. Columbia</strain>
    </source>
</reference>
<reference key="4">
    <citation type="journal article" date="2003" name="Science">
        <title>Empirical analysis of transcriptional activity in the Arabidopsis genome.</title>
        <authorList>
            <person name="Yamada K."/>
            <person name="Lim J."/>
            <person name="Dale J.M."/>
            <person name="Chen H."/>
            <person name="Shinn P."/>
            <person name="Palm C.J."/>
            <person name="Southwick A.M."/>
            <person name="Wu H.C."/>
            <person name="Kim C.J."/>
            <person name="Nguyen M."/>
            <person name="Pham P.K."/>
            <person name="Cheuk R.F."/>
            <person name="Karlin-Newmann G."/>
            <person name="Liu S.X."/>
            <person name="Lam B."/>
            <person name="Sakano H."/>
            <person name="Wu T."/>
            <person name="Yu G."/>
            <person name="Miranda M."/>
            <person name="Quach H.L."/>
            <person name="Tripp M."/>
            <person name="Chang C.H."/>
            <person name="Lee J.M."/>
            <person name="Toriumi M.J."/>
            <person name="Chan M.M."/>
            <person name="Tang C.C."/>
            <person name="Onodera C.S."/>
            <person name="Deng J.M."/>
            <person name="Akiyama K."/>
            <person name="Ansari Y."/>
            <person name="Arakawa T."/>
            <person name="Banh J."/>
            <person name="Banno F."/>
            <person name="Bowser L."/>
            <person name="Brooks S.Y."/>
            <person name="Carninci P."/>
            <person name="Chao Q."/>
            <person name="Choy N."/>
            <person name="Enju A."/>
            <person name="Goldsmith A.D."/>
            <person name="Gurjal M."/>
            <person name="Hansen N.F."/>
            <person name="Hayashizaki Y."/>
            <person name="Johnson-Hopson C."/>
            <person name="Hsuan V.W."/>
            <person name="Iida K."/>
            <person name="Karnes M."/>
            <person name="Khan S."/>
            <person name="Koesema E."/>
            <person name="Ishida J."/>
            <person name="Jiang P.X."/>
            <person name="Jones T."/>
            <person name="Kawai J."/>
            <person name="Kamiya A."/>
            <person name="Meyers C."/>
            <person name="Nakajima M."/>
            <person name="Narusaka M."/>
            <person name="Seki M."/>
            <person name="Sakurai T."/>
            <person name="Satou M."/>
            <person name="Tamse R."/>
            <person name="Vaysberg M."/>
            <person name="Wallender E.K."/>
            <person name="Wong C."/>
            <person name="Yamamura Y."/>
            <person name="Yuan S."/>
            <person name="Shinozaki K."/>
            <person name="Davis R.W."/>
            <person name="Theologis A."/>
            <person name="Ecker J.R."/>
        </authorList>
    </citation>
    <scope>NUCLEOTIDE SEQUENCE [LARGE SCALE MRNA]</scope>
    <source>
        <strain>cv. Columbia</strain>
    </source>
</reference>
<reference key="5">
    <citation type="journal article" date="2012" name="Front. Plant Sci.">
        <title>Plant glycosyltransferases beyond CAZy: a perspective on DUF families.</title>
        <authorList>
            <person name="Hansen S.F."/>
            <person name="Harholt J."/>
            <person name="Oikawa A."/>
            <person name="Scheller H.V."/>
        </authorList>
    </citation>
    <scope>GENE FAMILY</scope>
    <scope>REVIEW</scope>
</reference>
<reference key="6">
    <citation type="journal article" date="2012" name="PLoS ONE">
        <title>The FRIABLE1 gene product affects cell adhesion in Arabidopsis.</title>
        <authorList>
            <person name="Neumetzler L."/>
            <person name="Humphrey T."/>
            <person name="Lumba S."/>
            <person name="Snyder S."/>
            <person name="Yeats T.H."/>
            <person name="Usadel B."/>
            <person name="Vasilevski A."/>
            <person name="Patel J."/>
            <person name="Rose J.K."/>
            <person name="Persson S."/>
            <person name="Bonetta D."/>
        </authorList>
    </citation>
    <scope>GENE FAMILY</scope>
</reference>
<reference key="7">
    <citation type="journal article" date="2012" name="PLoS ONE">
        <title>Identification of putative rhamnogalacturonan-II specific glycosyltransferases in Arabidopsis using a combination of bioinformatics approaches.</title>
        <authorList>
            <person name="Voxeur A."/>
            <person name="Andre A."/>
            <person name="Breton C."/>
            <person name="Lerouge P."/>
        </authorList>
    </citation>
    <scope>GENE FAMILY</scope>
</reference>
<reference key="8">
    <citation type="journal article" date="2013" name="Plant J.">
        <title>Identification of an additional protein involved in mannan biosynthesis.</title>
        <authorList>
            <person name="Wang Y."/>
            <person name="Mortimer J.C."/>
            <person name="Davis J."/>
            <person name="Dupree P."/>
            <person name="Keegstra K."/>
        </authorList>
    </citation>
    <scope>GENE FAMILY</scope>
</reference>
<reference key="9">
    <citation type="journal article" date="2014" name="Plant J.">
        <title>The plant glycosyltransferase clone collection for functional genomics.</title>
        <authorList>
            <person name="Lao J."/>
            <person name="Oikawa A."/>
            <person name="Bromley J.R."/>
            <person name="McInerney P."/>
            <person name="Suttangkakul A."/>
            <person name="Smith-Moritz A.M."/>
            <person name="Plahar H."/>
            <person name="Chiu T.-Y."/>
            <person name="Gonzalez Fernandez-Nino S.M.G."/>
            <person name="Ebert B."/>
            <person name="Yang F."/>
            <person name="Christiansen K.M."/>
            <person name="Hansen S.F."/>
            <person name="Stonebloom S."/>
            <person name="Adams P.D."/>
            <person name="Ronald P.C."/>
            <person name="Hillson N.J."/>
            <person name="Hadi M.Z."/>
            <person name="Vega-Sanchez M.E."/>
            <person name="Loque D."/>
            <person name="Scheller H.V."/>
            <person name="Heazlewood J.L."/>
        </authorList>
    </citation>
    <scope>WEB RESOURCE</scope>
</reference>
<organism>
    <name type="scientific">Arabidopsis thaliana</name>
    <name type="common">Mouse-ear cress</name>
    <dbReference type="NCBI Taxonomy" id="3702"/>
    <lineage>
        <taxon>Eukaryota</taxon>
        <taxon>Viridiplantae</taxon>
        <taxon>Streptophyta</taxon>
        <taxon>Embryophyta</taxon>
        <taxon>Tracheophyta</taxon>
        <taxon>Spermatophyta</taxon>
        <taxon>Magnoliopsida</taxon>
        <taxon>eudicotyledons</taxon>
        <taxon>Gunneridae</taxon>
        <taxon>Pentapetalae</taxon>
        <taxon>rosids</taxon>
        <taxon>malvids</taxon>
        <taxon>Brassicales</taxon>
        <taxon>Brassicaceae</taxon>
        <taxon>Camelineae</taxon>
        <taxon>Arabidopsis</taxon>
    </lineage>
</organism>
<comment type="pathway">
    <text evidence="5">Glycan metabolism.</text>
</comment>
<comment type="subcellular location">
    <subcellularLocation>
        <location evidence="2">Membrane</location>
        <topology evidence="5">Single-pass type II membrane protein</topology>
    </subcellularLocation>
</comment>
<comment type="similarity">
    <text evidence="5">Belongs to the glycosyltransferase GT106 family.</text>
</comment>
<comment type="sequence caution" evidence="5">
    <conflict type="erroneous gene model prediction">
        <sequence resource="EMBL-CDS" id="BAB09990"/>
    </conflict>
</comment>
<dbReference type="EC" id="2.4.1.-" evidence="5"/>
<dbReference type="EMBL" id="KY906087">
    <property type="protein sequence ID" value="ARJ31451.1"/>
    <property type="molecule type" value="mRNA"/>
</dbReference>
<dbReference type="EMBL" id="AB023031">
    <property type="protein sequence ID" value="BAB09990.1"/>
    <property type="status" value="ALT_SEQ"/>
    <property type="molecule type" value="Genomic_DNA"/>
</dbReference>
<dbReference type="EMBL" id="CP002688">
    <property type="protein sequence ID" value="AED93982.1"/>
    <property type="molecule type" value="Genomic_DNA"/>
</dbReference>
<dbReference type="EMBL" id="AY039557">
    <property type="protein sequence ID" value="AAK62612.1"/>
    <property type="molecule type" value="mRNA"/>
</dbReference>
<dbReference type="EMBL" id="AY113032">
    <property type="protein sequence ID" value="AAM47340.1"/>
    <property type="molecule type" value="mRNA"/>
</dbReference>
<dbReference type="RefSeq" id="NP_568528.2">
    <property type="nucleotide sequence ID" value="NM_122948.3"/>
</dbReference>
<dbReference type="FunCoup" id="Q94BY4">
    <property type="interactions" value="1916"/>
</dbReference>
<dbReference type="GlyCosmos" id="Q94BY4">
    <property type="glycosylation" value="3 sites, No reported glycans"/>
</dbReference>
<dbReference type="GlyGen" id="Q94BY4">
    <property type="glycosylation" value="3 sites"/>
</dbReference>
<dbReference type="iPTMnet" id="Q94BY4"/>
<dbReference type="PaxDb" id="3702-AT5G35570.1"/>
<dbReference type="ProteomicsDB" id="250798"/>
<dbReference type="EnsemblPlants" id="AT5G35570.1">
    <property type="protein sequence ID" value="AT5G35570.1"/>
    <property type="gene ID" value="AT5G35570"/>
</dbReference>
<dbReference type="GeneID" id="833522"/>
<dbReference type="Gramene" id="AT5G35570.1">
    <property type="protein sequence ID" value="AT5G35570.1"/>
    <property type="gene ID" value="AT5G35570"/>
</dbReference>
<dbReference type="KEGG" id="ath:AT5G35570"/>
<dbReference type="Araport" id="AT5G35570"/>
<dbReference type="TAIR" id="AT5G35570"/>
<dbReference type="eggNOG" id="ENOG502QQ4D">
    <property type="taxonomic scope" value="Eukaryota"/>
</dbReference>
<dbReference type="HOGENOM" id="CLU_018420_7_2_1"/>
<dbReference type="InParanoid" id="Q94BY4"/>
<dbReference type="OMA" id="RQCIISN"/>
<dbReference type="PhylomeDB" id="Q94BY4"/>
<dbReference type="PRO" id="PR:Q94BY4"/>
<dbReference type="Proteomes" id="UP000006548">
    <property type="component" value="Chromosome 5"/>
</dbReference>
<dbReference type="ExpressionAtlas" id="Q94BY4">
    <property type="expression patterns" value="baseline and differential"/>
</dbReference>
<dbReference type="GO" id="GO:0009507">
    <property type="term" value="C:chloroplast"/>
    <property type="evidence" value="ECO:0007005"/>
    <property type="project" value="TAIR"/>
</dbReference>
<dbReference type="GO" id="GO:0005794">
    <property type="term" value="C:Golgi apparatus"/>
    <property type="evidence" value="ECO:0007005"/>
    <property type="project" value="TAIR"/>
</dbReference>
<dbReference type="GO" id="GO:0016020">
    <property type="term" value="C:membrane"/>
    <property type="evidence" value="ECO:0007669"/>
    <property type="project" value="UniProtKB-SubCell"/>
</dbReference>
<dbReference type="GO" id="GO:0016757">
    <property type="term" value="F:glycosyltransferase activity"/>
    <property type="evidence" value="ECO:0007669"/>
    <property type="project" value="UniProtKB-KW"/>
</dbReference>
<dbReference type="GO" id="GO:0006004">
    <property type="term" value="P:fucose metabolic process"/>
    <property type="evidence" value="ECO:0007669"/>
    <property type="project" value="UniProtKB-KW"/>
</dbReference>
<dbReference type="CDD" id="cd11299">
    <property type="entry name" value="O-FucT_plant"/>
    <property type="match status" value="1"/>
</dbReference>
<dbReference type="FunFam" id="3.40.50.11350:FF:000011">
    <property type="entry name" value="O-fucosyltransferase 28"/>
    <property type="match status" value="1"/>
</dbReference>
<dbReference type="InterPro" id="IPR024709">
    <property type="entry name" value="FucosylTrfase_pln"/>
</dbReference>
<dbReference type="InterPro" id="IPR019378">
    <property type="entry name" value="GDP-Fuc_O-FucTrfase"/>
</dbReference>
<dbReference type="PANTHER" id="PTHR31741:SF8">
    <property type="entry name" value="O-FUCOSYLTRANSFERASE 35"/>
    <property type="match status" value="1"/>
</dbReference>
<dbReference type="PANTHER" id="PTHR31741">
    <property type="entry name" value="OS02G0726500 PROTEIN-RELATED"/>
    <property type="match status" value="1"/>
</dbReference>
<dbReference type="Pfam" id="PF10250">
    <property type="entry name" value="O-FucT"/>
    <property type="match status" value="1"/>
</dbReference>
<gene>
    <name evidence="5" type="primary">OFUT35</name>
    <name evidence="6" type="ordered locus">At5g35570</name>
    <name evidence="8" type="ORF">K2K18.1</name>
</gene>